<proteinExistence type="inferred from homology"/>
<reference key="1">
    <citation type="submission" date="2006-12" db="EMBL/GenBank/DDBJ databases">
        <title>Complete sequence of chromosome of Mycobacterium sp. KMS.</title>
        <authorList>
            <consortium name="US DOE Joint Genome Institute"/>
            <person name="Copeland A."/>
            <person name="Lucas S."/>
            <person name="Lapidus A."/>
            <person name="Barry K."/>
            <person name="Detter J.C."/>
            <person name="Glavina del Rio T."/>
            <person name="Hammon N."/>
            <person name="Israni S."/>
            <person name="Dalin E."/>
            <person name="Tice H."/>
            <person name="Pitluck S."/>
            <person name="Kiss H."/>
            <person name="Brettin T."/>
            <person name="Bruce D."/>
            <person name="Han C."/>
            <person name="Tapia R."/>
            <person name="Gilna P."/>
            <person name="Schmutz J."/>
            <person name="Larimer F."/>
            <person name="Land M."/>
            <person name="Hauser L."/>
            <person name="Kyrpides N."/>
            <person name="Mikhailova N."/>
            <person name="Miller C.D."/>
            <person name="Richardson P."/>
        </authorList>
    </citation>
    <scope>NUCLEOTIDE SEQUENCE [LARGE SCALE GENOMIC DNA]</scope>
    <source>
        <strain>KMS</strain>
    </source>
</reference>
<dbReference type="EC" id="1.1.1.86" evidence="1"/>
<dbReference type="EMBL" id="CP000518">
    <property type="protein sequence ID" value="ABL91153.1"/>
    <property type="molecule type" value="Genomic_DNA"/>
</dbReference>
<dbReference type="SMR" id="A1UE95"/>
<dbReference type="STRING" id="189918.Mkms_1954"/>
<dbReference type="KEGG" id="mkm:Mkms_1954"/>
<dbReference type="HOGENOM" id="CLU_033821_0_1_11"/>
<dbReference type="OrthoDB" id="9804088at2"/>
<dbReference type="UniPathway" id="UPA00047">
    <property type="reaction ID" value="UER00056"/>
</dbReference>
<dbReference type="UniPathway" id="UPA00049">
    <property type="reaction ID" value="UER00060"/>
</dbReference>
<dbReference type="GO" id="GO:0005829">
    <property type="term" value="C:cytosol"/>
    <property type="evidence" value="ECO:0007669"/>
    <property type="project" value="TreeGrafter"/>
</dbReference>
<dbReference type="GO" id="GO:0004455">
    <property type="term" value="F:ketol-acid reductoisomerase activity"/>
    <property type="evidence" value="ECO:0007669"/>
    <property type="project" value="UniProtKB-UniRule"/>
</dbReference>
<dbReference type="GO" id="GO:0000287">
    <property type="term" value="F:magnesium ion binding"/>
    <property type="evidence" value="ECO:0007669"/>
    <property type="project" value="UniProtKB-UniRule"/>
</dbReference>
<dbReference type="GO" id="GO:0050661">
    <property type="term" value="F:NADP binding"/>
    <property type="evidence" value="ECO:0007669"/>
    <property type="project" value="InterPro"/>
</dbReference>
<dbReference type="GO" id="GO:0009097">
    <property type="term" value="P:isoleucine biosynthetic process"/>
    <property type="evidence" value="ECO:0007669"/>
    <property type="project" value="UniProtKB-UniRule"/>
</dbReference>
<dbReference type="GO" id="GO:0009099">
    <property type="term" value="P:L-valine biosynthetic process"/>
    <property type="evidence" value="ECO:0007669"/>
    <property type="project" value="UniProtKB-UniRule"/>
</dbReference>
<dbReference type="FunFam" id="3.40.50.720:FF:000023">
    <property type="entry name" value="Ketol-acid reductoisomerase (NADP(+))"/>
    <property type="match status" value="1"/>
</dbReference>
<dbReference type="Gene3D" id="6.10.240.10">
    <property type="match status" value="1"/>
</dbReference>
<dbReference type="Gene3D" id="3.40.50.720">
    <property type="entry name" value="NAD(P)-binding Rossmann-like Domain"/>
    <property type="match status" value="1"/>
</dbReference>
<dbReference type="HAMAP" id="MF_00435">
    <property type="entry name" value="IlvC"/>
    <property type="match status" value="1"/>
</dbReference>
<dbReference type="InterPro" id="IPR008927">
    <property type="entry name" value="6-PGluconate_DH-like_C_sf"/>
</dbReference>
<dbReference type="InterPro" id="IPR013023">
    <property type="entry name" value="KARI"/>
</dbReference>
<dbReference type="InterPro" id="IPR000506">
    <property type="entry name" value="KARI_C"/>
</dbReference>
<dbReference type="InterPro" id="IPR013116">
    <property type="entry name" value="KARI_N"/>
</dbReference>
<dbReference type="InterPro" id="IPR014359">
    <property type="entry name" value="KARI_prok"/>
</dbReference>
<dbReference type="InterPro" id="IPR036291">
    <property type="entry name" value="NAD(P)-bd_dom_sf"/>
</dbReference>
<dbReference type="NCBIfam" id="TIGR00465">
    <property type="entry name" value="ilvC"/>
    <property type="match status" value="1"/>
</dbReference>
<dbReference type="NCBIfam" id="NF004017">
    <property type="entry name" value="PRK05479.1"/>
    <property type="match status" value="1"/>
</dbReference>
<dbReference type="PANTHER" id="PTHR21371">
    <property type="entry name" value="KETOL-ACID REDUCTOISOMERASE, MITOCHONDRIAL"/>
    <property type="match status" value="1"/>
</dbReference>
<dbReference type="PANTHER" id="PTHR21371:SF1">
    <property type="entry name" value="KETOL-ACID REDUCTOISOMERASE, MITOCHONDRIAL"/>
    <property type="match status" value="1"/>
</dbReference>
<dbReference type="Pfam" id="PF01450">
    <property type="entry name" value="KARI_C"/>
    <property type="match status" value="1"/>
</dbReference>
<dbReference type="Pfam" id="PF07991">
    <property type="entry name" value="KARI_N"/>
    <property type="match status" value="1"/>
</dbReference>
<dbReference type="PIRSF" id="PIRSF000116">
    <property type="entry name" value="IlvC_gammaproteo"/>
    <property type="match status" value="1"/>
</dbReference>
<dbReference type="SUPFAM" id="SSF48179">
    <property type="entry name" value="6-phosphogluconate dehydrogenase C-terminal domain-like"/>
    <property type="match status" value="1"/>
</dbReference>
<dbReference type="SUPFAM" id="SSF51735">
    <property type="entry name" value="NAD(P)-binding Rossmann-fold domains"/>
    <property type="match status" value="1"/>
</dbReference>
<dbReference type="PROSITE" id="PS51851">
    <property type="entry name" value="KARI_C"/>
    <property type="match status" value="1"/>
</dbReference>
<dbReference type="PROSITE" id="PS51850">
    <property type="entry name" value="KARI_N"/>
    <property type="match status" value="1"/>
</dbReference>
<name>ILVC_MYCSK</name>
<protein>
    <recommendedName>
        <fullName evidence="1">Ketol-acid reductoisomerase (NADP(+))</fullName>
        <shortName evidence="1">KARI</shortName>
        <ecNumber evidence="1">1.1.1.86</ecNumber>
    </recommendedName>
    <alternativeName>
        <fullName evidence="1">Acetohydroxy-acid isomeroreductase</fullName>
        <shortName evidence="1">AHIR</shortName>
    </alternativeName>
    <alternativeName>
        <fullName evidence="1">Alpha-keto-beta-hydroxylacyl reductoisomerase</fullName>
    </alternativeName>
    <alternativeName>
        <fullName evidence="1">Ketol-acid reductoisomerase type 1</fullName>
    </alternativeName>
    <alternativeName>
        <fullName evidence="1">Ketol-acid reductoisomerase type I</fullName>
    </alternativeName>
</protein>
<comment type="function">
    <text evidence="1">Involved in the biosynthesis of branched-chain amino acids (BCAA). Catalyzes an alkyl-migration followed by a ketol-acid reduction of (S)-2-acetolactate (S2AL) to yield (R)-2,3-dihydroxy-isovalerate. In the isomerase reaction, S2AL is rearranged via a Mg-dependent methyl migration to produce 3-hydroxy-3-methyl-2-ketobutyrate (HMKB). In the reductase reaction, this 2-ketoacid undergoes a metal-dependent reduction by NADPH to yield (R)-2,3-dihydroxy-isovalerate.</text>
</comment>
<comment type="catalytic activity">
    <reaction evidence="1">
        <text>(2R)-2,3-dihydroxy-3-methylbutanoate + NADP(+) = (2S)-2-acetolactate + NADPH + H(+)</text>
        <dbReference type="Rhea" id="RHEA:22068"/>
        <dbReference type="ChEBI" id="CHEBI:15378"/>
        <dbReference type="ChEBI" id="CHEBI:49072"/>
        <dbReference type="ChEBI" id="CHEBI:57783"/>
        <dbReference type="ChEBI" id="CHEBI:58349"/>
        <dbReference type="ChEBI" id="CHEBI:58476"/>
        <dbReference type="EC" id="1.1.1.86"/>
    </reaction>
</comment>
<comment type="catalytic activity">
    <reaction evidence="1">
        <text>(2R,3R)-2,3-dihydroxy-3-methylpentanoate + NADP(+) = (S)-2-ethyl-2-hydroxy-3-oxobutanoate + NADPH + H(+)</text>
        <dbReference type="Rhea" id="RHEA:13493"/>
        <dbReference type="ChEBI" id="CHEBI:15378"/>
        <dbReference type="ChEBI" id="CHEBI:49256"/>
        <dbReference type="ChEBI" id="CHEBI:49258"/>
        <dbReference type="ChEBI" id="CHEBI:57783"/>
        <dbReference type="ChEBI" id="CHEBI:58349"/>
        <dbReference type="EC" id="1.1.1.86"/>
    </reaction>
</comment>
<comment type="cofactor">
    <cofactor evidence="1">
        <name>Mg(2+)</name>
        <dbReference type="ChEBI" id="CHEBI:18420"/>
    </cofactor>
    <text evidence="1">Binds 2 magnesium ions per subunit.</text>
</comment>
<comment type="pathway">
    <text evidence="1">Amino-acid biosynthesis; L-isoleucine biosynthesis; L-isoleucine from 2-oxobutanoate: step 2/4.</text>
</comment>
<comment type="pathway">
    <text evidence="1">Amino-acid biosynthesis; L-valine biosynthesis; L-valine from pyruvate: step 2/4.</text>
</comment>
<comment type="similarity">
    <text evidence="1">Belongs to the ketol-acid reductoisomerase family.</text>
</comment>
<feature type="chain" id="PRO_1000050541" description="Ketol-acid reductoisomerase (NADP(+))">
    <location>
        <begin position="1"/>
        <end position="337"/>
    </location>
</feature>
<feature type="domain" description="KARI N-terminal Rossmann" evidence="2">
    <location>
        <begin position="3"/>
        <end position="183"/>
    </location>
</feature>
<feature type="domain" description="KARI C-terminal knotted" evidence="3">
    <location>
        <begin position="184"/>
        <end position="329"/>
    </location>
</feature>
<feature type="active site" evidence="1">
    <location>
        <position position="109"/>
    </location>
</feature>
<feature type="binding site" evidence="1">
    <location>
        <begin position="26"/>
        <end position="29"/>
    </location>
    <ligand>
        <name>NADP(+)</name>
        <dbReference type="ChEBI" id="CHEBI:58349"/>
    </ligand>
</feature>
<feature type="binding site" evidence="1">
    <location>
        <position position="49"/>
    </location>
    <ligand>
        <name>NADP(+)</name>
        <dbReference type="ChEBI" id="CHEBI:58349"/>
    </ligand>
</feature>
<feature type="binding site" evidence="1">
    <location>
        <position position="52"/>
    </location>
    <ligand>
        <name>NADP(+)</name>
        <dbReference type="ChEBI" id="CHEBI:58349"/>
    </ligand>
</feature>
<feature type="binding site" evidence="1">
    <location>
        <position position="54"/>
    </location>
    <ligand>
        <name>NADP(+)</name>
        <dbReference type="ChEBI" id="CHEBI:58349"/>
    </ligand>
</feature>
<feature type="binding site" evidence="1">
    <location>
        <begin position="84"/>
        <end position="87"/>
    </location>
    <ligand>
        <name>NADP(+)</name>
        <dbReference type="ChEBI" id="CHEBI:58349"/>
    </ligand>
</feature>
<feature type="binding site" evidence="1">
    <location>
        <position position="135"/>
    </location>
    <ligand>
        <name>NADP(+)</name>
        <dbReference type="ChEBI" id="CHEBI:58349"/>
    </ligand>
</feature>
<feature type="binding site" evidence="1">
    <location>
        <position position="192"/>
    </location>
    <ligand>
        <name>Mg(2+)</name>
        <dbReference type="ChEBI" id="CHEBI:18420"/>
        <label>1</label>
    </ligand>
</feature>
<feature type="binding site" evidence="1">
    <location>
        <position position="192"/>
    </location>
    <ligand>
        <name>Mg(2+)</name>
        <dbReference type="ChEBI" id="CHEBI:18420"/>
        <label>2</label>
    </ligand>
</feature>
<feature type="binding site" evidence="1">
    <location>
        <position position="196"/>
    </location>
    <ligand>
        <name>Mg(2+)</name>
        <dbReference type="ChEBI" id="CHEBI:18420"/>
        <label>1</label>
    </ligand>
</feature>
<feature type="binding site" evidence="1">
    <location>
        <position position="228"/>
    </location>
    <ligand>
        <name>Mg(2+)</name>
        <dbReference type="ChEBI" id="CHEBI:18420"/>
        <label>2</label>
    </ligand>
</feature>
<feature type="binding site" evidence="1">
    <location>
        <position position="232"/>
    </location>
    <ligand>
        <name>Mg(2+)</name>
        <dbReference type="ChEBI" id="CHEBI:18420"/>
        <label>2</label>
    </ligand>
</feature>
<feature type="binding site" evidence="1">
    <location>
        <position position="253"/>
    </location>
    <ligand>
        <name>substrate</name>
    </ligand>
</feature>
<gene>
    <name evidence="1" type="primary">ilvC</name>
    <name type="ordered locus">Mkms_1954</name>
</gene>
<organism>
    <name type="scientific">Mycobacterium sp. (strain KMS)</name>
    <dbReference type="NCBI Taxonomy" id="189918"/>
    <lineage>
        <taxon>Bacteria</taxon>
        <taxon>Bacillati</taxon>
        <taxon>Actinomycetota</taxon>
        <taxon>Actinomycetes</taxon>
        <taxon>Mycobacteriales</taxon>
        <taxon>Mycobacteriaceae</taxon>
        <taxon>Mycobacterium</taxon>
    </lineage>
</organism>
<evidence type="ECO:0000255" key="1">
    <source>
        <dbReference type="HAMAP-Rule" id="MF_00435"/>
    </source>
</evidence>
<evidence type="ECO:0000255" key="2">
    <source>
        <dbReference type="PROSITE-ProRule" id="PRU01197"/>
    </source>
</evidence>
<evidence type="ECO:0000255" key="3">
    <source>
        <dbReference type="PROSITE-ProRule" id="PRU01198"/>
    </source>
</evidence>
<sequence length="337" mass="36536">MAVEMFYDDDADLSIIQGRKVAVIGYGSQGHAHSLSLRDSGVQVKVGLKEGSKSREKVTEQGLEVDTPAEVAKWADVIMLLAPDTAQAEIFTNDIEPNLEDGNALFFGHGLNIHFGLIKPPANVTVGMVAPKGPGHLVRRQFVDGKGVPCLIAIDQDPKGEGQALALSYAAAIGGARAGVIKTTFKEETETDLFGEQAVLCGGTEELVKTGFEVMVEAGYAPEMAYFEVLHELKLIVDLMYEGGIARMNYSVSDTAEFGGYLSGPRVIDADTKERMRAILKDIQDGTFVKRLVANVEGGNKELEDLRKKNAEHPIEVTGKKLRDLMSWVDRPITETA</sequence>
<accession>A1UE95</accession>
<keyword id="KW-0028">Amino-acid biosynthesis</keyword>
<keyword id="KW-0100">Branched-chain amino acid biosynthesis</keyword>
<keyword id="KW-0460">Magnesium</keyword>
<keyword id="KW-0479">Metal-binding</keyword>
<keyword id="KW-0521">NADP</keyword>
<keyword id="KW-0560">Oxidoreductase</keyword>